<sequence>MARVAGVNIPDNKHTVIALTAIYGIGRTRAQKICEATGVKPDMKIRDLTEEEVEKLRAAVGQFPVEGDLRREVSMNIKRLMDLGCYRGLRHRRGLPLRGQRTRTNARTRKGPRRPIRK</sequence>
<name>RS13_THISH</name>
<comment type="function">
    <text evidence="1">Located at the top of the head of the 30S subunit, it contacts several helices of the 16S rRNA. In the 70S ribosome it contacts the 23S rRNA (bridge B1a) and protein L5 of the 50S subunit (bridge B1b), connecting the 2 subunits; these bridges are implicated in subunit movement. Contacts the tRNAs in the A and P-sites.</text>
</comment>
<comment type="subunit">
    <text evidence="1">Part of the 30S ribosomal subunit. Forms a loose heterodimer with protein S19. Forms two bridges to the 50S subunit in the 70S ribosome.</text>
</comment>
<comment type="similarity">
    <text evidence="1">Belongs to the universal ribosomal protein uS13 family.</text>
</comment>
<accession>B8GV36</accession>
<keyword id="KW-1185">Reference proteome</keyword>
<keyword id="KW-0687">Ribonucleoprotein</keyword>
<keyword id="KW-0689">Ribosomal protein</keyword>
<keyword id="KW-0694">RNA-binding</keyword>
<keyword id="KW-0699">rRNA-binding</keyword>
<keyword id="KW-0820">tRNA-binding</keyword>
<protein>
    <recommendedName>
        <fullName evidence="1">Small ribosomal subunit protein uS13</fullName>
    </recommendedName>
    <alternativeName>
        <fullName evidence="3">30S ribosomal protein S13</fullName>
    </alternativeName>
</protein>
<organism>
    <name type="scientific">Thioalkalivibrio sulfidiphilus (strain HL-EbGR7)</name>
    <dbReference type="NCBI Taxonomy" id="396588"/>
    <lineage>
        <taxon>Bacteria</taxon>
        <taxon>Pseudomonadati</taxon>
        <taxon>Pseudomonadota</taxon>
        <taxon>Gammaproteobacteria</taxon>
        <taxon>Chromatiales</taxon>
        <taxon>Ectothiorhodospiraceae</taxon>
        <taxon>Thioalkalivibrio</taxon>
    </lineage>
</organism>
<proteinExistence type="inferred from homology"/>
<dbReference type="EMBL" id="CP001339">
    <property type="protein sequence ID" value="ACL73382.1"/>
    <property type="molecule type" value="Genomic_DNA"/>
</dbReference>
<dbReference type="RefSeq" id="WP_012638858.1">
    <property type="nucleotide sequence ID" value="NC_011901.1"/>
</dbReference>
<dbReference type="SMR" id="B8GV36"/>
<dbReference type="STRING" id="396588.Tgr7_2302"/>
<dbReference type="KEGG" id="tgr:Tgr7_2302"/>
<dbReference type="eggNOG" id="COG0099">
    <property type="taxonomic scope" value="Bacteria"/>
</dbReference>
<dbReference type="HOGENOM" id="CLU_103849_1_2_6"/>
<dbReference type="OrthoDB" id="9803610at2"/>
<dbReference type="Proteomes" id="UP000002383">
    <property type="component" value="Chromosome"/>
</dbReference>
<dbReference type="GO" id="GO:0005829">
    <property type="term" value="C:cytosol"/>
    <property type="evidence" value="ECO:0007669"/>
    <property type="project" value="TreeGrafter"/>
</dbReference>
<dbReference type="GO" id="GO:0015935">
    <property type="term" value="C:small ribosomal subunit"/>
    <property type="evidence" value="ECO:0007669"/>
    <property type="project" value="TreeGrafter"/>
</dbReference>
<dbReference type="GO" id="GO:0019843">
    <property type="term" value="F:rRNA binding"/>
    <property type="evidence" value="ECO:0007669"/>
    <property type="project" value="UniProtKB-UniRule"/>
</dbReference>
<dbReference type="GO" id="GO:0003735">
    <property type="term" value="F:structural constituent of ribosome"/>
    <property type="evidence" value="ECO:0007669"/>
    <property type="project" value="InterPro"/>
</dbReference>
<dbReference type="GO" id="GO:0000049">
    <property type="term" value="F:tRNA binding"/>
    <property type="evidence" value="ECO:0007669"/>
    <property type="project" value="UniProtKB-UniRule"/>
</dbReference>
<dbReference type="GO" id="GO:0006412">
    <property type="term" value="P:translation"/>
    <property type="evidence" value="ECO:0007669"/>
    <property type="project" value="UniProtKB-UniRule"/>
</dbReference>
<dbReference type="FunFam" id="1.10.8.50:FF:000001">
    <property type="entry name" value="30S ribosomal protein S13"/>
    <property type="match status" value="1"/>
</dbReference>
<dbReference type="FunFam" id="4.10.910.10:FF:000001">
    <property type="entry name" value="30S ribosomal protein S13"/>
    <property type="match status" value="1"/>
</dbReference>
<dbReference type="Gene3D" id="1.10.8.50">
    <property type="match status" value="1"/>
</dbReference>
<dbReference type="Gene3D" id="4.10.910.10">
    <property type="entry name" value="30s ribosomal protein s13, domain 2"/>
    <property type="match status" value="1"/>
</dbReference>
<dbReference type="HAMAP" id="MF_01315">
    <property type="entry name" value="Ribosomal_uS13"/>
    <property type="match status" value="1"/>
</dbReference>
<dbReference type="InterPro" id="IPR027437">
    <property type="entry name" value="Rbsml_uS13_C"/>
</dbReference>
<dbReference type="InterPro" id="IPR001892">
    <property type="entry name" value="Ribosomal_uS13"/>
</dbReference>
<dbReference type="InterPro" id="IPR010979">
    <property type="entry name" value="Ribosomal_uS13-like_H2TH"/>
</dbReference>
<dbReference type="InterPro" id="IPR019980">
    <property type="entry name" value="Ribosomal_uS13_bac-type"/>
</dbReference>
<dbReference type="InterPro" id="IPR018269">
    <property type="entry name" value="Ribosomal_uS13_CS"/>
</dbReference>
<dbReference type="NCBIfam" id="TIGR03631">
    <property type="entry name" value="uS13_bact"/>
    <property type="match status" value="1"/>
</dbReference>
<dbReference type="PANTHER" id="PTHR10871">
    <property type="entry name" value="30S RIBOSOMAL PROTEIN S13/40S RIBOSOMAL PROTEIN S18"/>
    <property type="match status" value="1"/>
</dbReference>
<dbReference type="PANTHER" id="PTHR10871:SF1">
    <property type="entry name" value="SMALL RIBOSOMAL SUBUNIT PROTEIN US13M"/>
    <property type="match status" value="1"/>
</dbReference>
<dbReference type="Pfam" id="PF00416">
    <property type="entry name" value="Ribosomal_S13"/>
    <property type="match status" value="2"/>
</dbReference>
<dbReference type="PIRSF" id="PIRSF002134">
    <property type="entry name" value="Ribosomal_S13"/>
    <property type="match status" value="1"/>
</dbReference>
<dbReference type="SUPFAM" id="SSF46946">
    <property type="entry name" value="S13-like H2TH domain"/>
    <property type="match status" value="1"/>
</dbReference>
<dbReference type="PROSITE" id="PS00646">
    <property type="entry name" value="RIBOSOMAL_S13_1"/>
    <property type="match status" value="1"/>
</dbReference>
<dbReference type="PROSITE" id="PS50159">
    <property type="entry name" value="RIBOSOMAL_S13_2"/>
    <property type="match status" value="1"/>
</dbReference>
<gene>
    <name evidence="1" type="primary">rpsM</name>
    <name type="ordered locus">Tgr7_2302</name>
</gene>
<evidence type="ECO:0000255" key="1">
    <source>
        <dbReference type="HAMAP-Rule" id="MF_01315"/>
    </source>
</evidence>
<evidence type="ECO:0000256" key="2">
    <source>
        <dbReference type="SAM" id="MobiDB-lite"/>
    </source>
</evidence>
<evidence type="ECO:0000305" key="3"/>
<feature type="chain" id="PRO_1000165646" description="Small ribosomal subunit protein uS13">
    <location>
        <begin position="1"/>
        <end position="118"/>
    </location>
</feature>
<feature type="region of interest" description="Disordered" evidence="2">
    <location>
        <begin position="94"/>
        <end position="118"/>
    </location>
</feature>
<reference key="1">
    <citation type="journal article" date="2011" name="Stand. Genomic Sci.">
        <title>Complete genome sequence of 'Thioalkalivibrio sulfidophilus' HL-EbGr7.</title>
        <authorList>
            <person name="Muyzer G."/>
            <person name="Sorokin D.Y."/>
            <person name="Mavromatis K."/>
            <person name="Lapidus A."/>
            <person name="Clum A."/>
            <person name="Ivanova N."/>
            <person name="Pati A."/>
            <person name="d'Haeseleer P."/>
            <person name="Woyke T."/>
            <person name="Kyrpides N.C."/>
        </authorList>
    </citation>
    <scope>NUCLEOTIDE SEQUENCE [LARGE SCALE GENOMIC DNA]</scope>
    <source>
        <strain>HL-EbGR7</strain>
    </source>
</reference>